<organism>
    <name type="scientific">Arabidopsis thaliana</name>
    <name type="common">Mouse-ear cress</name>
    <dbReference type="NCBI Taxonomy" id="3702"/>
    <lineage>
        <taxon>Eukaryota</taxon>
        <taxon>Viridiplantae</taxon>
        <taxon>Streptophyta</taxon>
        <taxon>Embryophyta</taxon>
        <taxon>Tracheophyta</taxon>
        <taxon>Spermatophyta</taxon>
        <taxon>Magnoliopsida</taxon>
        <taxon>eudicotyledons</taxon>
        <taxon>Gunneridae</taxon>
        <taxon>Pentapetalae</taxon>
        <taxon>rosids</taxon>
        <taxon>malvids</taxon>
        <taxon>Brassicales</taxon>
        <taxon>Brassicaceae</taxon>
        <taxon>Camelineae</taxon>
        <taxon>Arabidopsis</taxon>
    </lineage>
</organism>
<feature type="chain" id="PRO_0000283331" description="Putative F-box protein At1g53550">
    <location>
        <begin position="1"/>
        <end position="408"/>
    </location>
</feature>
<feature type="domain" description="F-box">
    <location>
        <begin position="29"/>
        <end position="74"/>
    </location>
</feature>
<name>FB57_ARATH</name>
<reference key="1">
    <citation type="journal article" date="2000" name="Nature">
        <title>Sequence and analysis of chromosome 1 of the plant Arabidopsis thaliana.</title>
        <authorList>
            <person name="Theologis A."/>
            <person name="Ecker J.R."/>
            <person name="Palm C.J."/>
            <person name="Federspiel N.A."/>
            <person name="Kaul S."/>
            <person name="White O."/>
            <person name="Alonso J."/>
            <person name="Altafi H."/>
            <person name="Araujo R."/>
            <person name="Bowman C.L."/>
            <person name="Brooks S.Y."/>
            <person name="Buehler E."/>
            <person name="Chan A."/>
            <person name="Chao Q."/>
            <person name="Chen H."/>
            <person name="Cheuk R.F."/>
            <person name="Chin C.W."/>
            <person name="Chung M.K."/>
            <person name="Conn L."/>
            <person name="Conway A.B."/>
            <person name="Conway A.R."/>
            <person name="Creasy T.H."/>
            <person name="Dewar K."/>
            <person name="Dunn P."/>
            <person name="Etgu P."/>
            <person name="Feldblyum T.V."/>
            <person name="Feng J.-D."/>
            <person name="Fong B."/>
            <person name="Fujii C.Y."/>
            <person name="Gill J.E."/>
            <person name="Goldsmith A.D."/>
            <person name="Haas B."/>
            <person name="Hansen N.F."/>
            <person name="Hughes B."/>
            <person name="Huizar L."/>
            <person name="Hunter J.L."/>
            <person name="Jenkins J."/>
            <person name="Johnson-Hopson C."/>
            <person name="Khan S."/>
            <person name="Khaykin E."/>
            <person name="Kim C.J."/>
            <person name="Koo H.L."/>
            <person name="Kremenetskaia I."/>
            <person name="Kurtz D.B."/>
            <person name="Kwan A."/>
            <person name="Lam B."/>
            <person name="Langin-Hooper S."/>
            <person name="Lee A."/>
            <person name="Lee J.M."/>
            <person name="Lenz C.A."/>
            <person name="Li J.H."/>
            <person name="Li Y.-P."/>
            <person name="Lin X."/>
            <person name="Liu S.X."/>
            <person name="Liu Z.A."/>
            <person name="Luros J.S."/>
            <person name="Maiti R."/>
            <person name="Marziali A."/>
            <person name="Militscher J."/>
            <person name="Miranda M."/>
            <person name="Nguyen M."/>
            <person name="Nierman W.C."/>
            <person name="Osborne B.I."/>
            <person name="Pai G."/>
            <person name="Peterson J."/>
            <person name="Pham P.K."/>
            <person name="Rizzo M."/>
            <person name="Rooney T."/>
            <person name="Rowley D."/>
            <person name="Sakano H."/>
            <person name="Salzberg S.L."/>
            <person name="Schwartz J.R."/>
            <person name="Shinn P."/>
            <person name="Southwick A.M."/>
            <person name="Sun H."/>
            <person name="Tallon L.J."/>
            <person name="Tambunga G."/>
            <person name="Toriumi M.J."/>
            <person name="Town C.D."/>
            <person name="Utterback T."/>
            <person name="Van Aken S."/>
            <person name="Vaysberg M."/>
            <person name="Vysotskaia V.S."/>
            <person name="Walker M."/>
            <person name="Wu D."/>
            <person name="Yu G."/>
            <person name="Fraser C.M."/>
            <person name="Venter J.C."/>
            <person name="Davis R.W."/>
        </authorList>
    </citation>
    <scope>NUCLEOTIDE SEQUENCE [LARGE SCALE GENOMIC DNA]</scope>
    <source>
        <strain>cv. Columbia</strain>
    </source>
</reference>
<reference key="2">
    <citation type="journal article" date="2017" name="Plant J.">
        <title>Araport11: a complete reannotation of the Arabidopsis thaliana reference genome.</title>
        <authorList>
            <person name="Cheng C.Y."/>
            <person name="Krishnakumar V."/>
            <person name="Chan A.P."/>
            <person name="Thibaud-Nissen F."/>
            <person name="Schobel S."/>
            <person name="Town C.D."/>
        </authorList>
    </citation>
    <scope>GENOME REANNOTATION</scope>
    <source>
        <strain>cv. Columbia</strain>
    </source>
</reference>
<keyword id="KW-1185">Reference proteome</keyword>
<sequence>MRKRKQQVYNDNLIVSRSNKRSSTSGKETCYFDPIPVDLVINILSRLSLECIARCRCVSKLWSSIIRRPNYNQLFPVKSSATPRLLFVFKVARELFFNSSPQHFNPNNSSLVATSLQKTSSTRFSQLCRPVHGLICSQHIEENYLFALISNPTTGEYIALPKQRMEEMNSETIIEKVRYSFGYDPIDKQFKVLRITWLHRGSHEWSSEYQVLTLGFGNISWRNTQCCVVHYLLEDSGICINGVLYYPARLDNRKYTIVCFDVMTEKFSFTSIDKDMTIMTNLSFSLIDYKGKLGACICDHTLFELWVLENAEEHKWSKNIYNMPYSRSRLEETSYLKCAGMIASGEILLYPISSANTSTDARYPFIYYYNLERNIITRVTLQVPILKQFTYARLFYTFSNFLENVTLI</sequence>
<comment type="sequence caution" evidence="1">
    <conflict type="erroneous gene model prediction">
        <sequence resource="EMBL-CDS" id="AAF78435"/>
    </conflict>
</comment>
<proteinExistence type="predicted"/>
<gene>
    <name type="ordered locus">At1g53550</name>
    <name type="ORF">T3F20.14</name>
</gene>
<evidence type="ECO:0000305" key="1"/>
<accession>Q9LPH0</accession>
<accession>F4HRJ2</accession>
<protein>
    <recommendedName>
        <fullName>Putative F-box protein At1g53550</fullName>
    </recommendedName>
</protein>
<dbReference type="EMBL" id="AC018748">
    <property type="protein sequence ID" value="AAF78435.1"/>
    <property type="status" value="ALT_SEQ"/>
    <property type="molecule type" value="Genomic_DNA"/>
</dbReference>
<dbReference type="EMBL" id="CP002684">
    <property type="protein sequence ID" value="AEE32958.1"/>
    <property type="molecule type" value="Genomic_DNA"/>
</dbReference>
<dbReference type="RefSeq" id="NP_175760.1">
    <property type="nucleotide sequence ID" value="NM_104233.1"/>
</dbReference>
<dbReference type="FunCoup" id="Q9LPH0">
    <property type="interactions" value="22"/>
</dbReference>
<dbReference type="iPTMnet" id="Q9LPH0"/>
<dbReference type="PaxDb" id="3702-AT1G53550.1"/>
<dbReference type="EnsemblPlants" id="AT1G53550.1">
    <property type="protein sequence ID" value="AT1G53550.1"/>
    <property type="gene ID" value="AT1G53550"/>
</dbReference>
<dbReference type="GeneID" id="841790"/>
<dbReference type="Gramene" id="AT1G53550.1">
    <property type="protein sequence ID" value="AT1G53550.1"/>
    <property type="gene ID" value="AT1G53550"/>
</dbReference>
<dbReference type="KEGG" id="ath:AT1G53550"/>
<dbReference type="Araport" id="AT1G53550"/>
<dbReference type="TAIR" id="AT1G53550"/>
<dbReference type="HOGENOM" id="CLU_027176_8_1_1"/>
<dbReference type="InParanoid" id="Q9LPH0"/>
<dbReference type="OMA" id="EILLYRM"/>
<dbReference type="PRO" id="PR:Q9LPH0"/>
<dbReference type="Proteomes" id="UP000006548">
    <property type="component" value="Chromosome 1"/>
</dbReference>
<dbReference type="ExpressionAtlas" id="Q9LPH0">
    <property type="expression patterns" value="differential"/>
</dbReference>
<dbReference type="Gene3D" id="1.20.1280.50">
    <property type="match status" value="1"/>
</dbReference>
<dbReference type="InterPro" id="IPR013187">
    <property type="entry name" value="F-box-assoc_dom_typ3"/>
</dbReference>
<dbReference type="InterPro" id="IPR017451">
    <property type="entry name" value="F-box-assoc_interact_dom"/>
</dbReference>
<dbReference type="InterPro" id="IPR036047">
    <property type="entry name" value="F-box-like_dom_sf"/>
</dbReference>
<dbReference type="InterPro" id="IPR001810">
    <property type="entry name" value="F-box_dom"/>
</dbReference>
<dbReference type="NCBIfam" id="TIGR01640">
    <property type="entry name" value="F_box_assoc_1"/>
    <property type="match status" value="1"/>
</dbReference>
<dbReference type="PANTHER" id="PTHR31111">
    <property type="entry name" value="BNAA05G37150D PROTEIN-RELATED"/>
    <property type="match status" value="1"/>
</dbReference>
<dbReference type="PANTHER" id="PTHR31111:SF94">
    <property type="entry name" value="E3 UBIQUITIN-PROTEIN LIGASE SGIP1"/>
    <property type="match status" value="1"/>
</dbReference>
<dbReference type="Pfam" id="PF00646">
    <property type="entry name" value="F-box"/>
    <property type="match status" value="1"/>
</dbReference>
<dbReference type="Pfam" id="PF08268">
    <property type="entry name" value="FBA_3"/>
    <property type="match status" value="1"/>
</dbReference>
<dbReference type="SMART" id="SM00256">
    <property type="entry name" value="FBOX"/>
    <property type="match status" value="1"/>
</dbReference>
<dbReference type="SUPFAM" id="SSF81383">
    <property type="entry name" value="F-box domain"/>
    <property type="match status" value="1"/>
</dbReference>